<proteinExistence type="inferred from homology"/>
<dbReference type="EC" id="7.6.2.7" evidence="1"/>
<dbReference type="EMBL" id="CP000272">
    <property type="protein sequence ID" value="ABE36012.1"/>
    <property type="molecule type" value="Genomic_DNA"/>
</dbReference>
<dbReference type="RefSeq" id="WP_011493272.1">
    <property type="nucleotide sequence ID" value="NC_007953.1"/>
</dbReference>
<dbReference type="SMR" id="Q13IS7"/>
<dbReference type="STRING" id="266265.Bxe_C0086"/>
<dbReference type="KEGG" id="bxb:DR64_8341"/>
<dbReference type="KEGG" id="bxe:Bxe_C0086"/>
<dbReference type="PATRIC" id="fig|266265.5.peg.7866"/>
<dbReference type="eggNOG" id="COG4525">
    <property type="taxonomic scope" value="Bacteria"/>
</dbReference>
<dbReference type="OrthoDB" id="9783039at2"/>
<dbReference type="Proteomes" id="UP000001817">
    <property type="component" value="Chromosome 3"/>
</dbReference>
<dbReference type="GO" id="GO:0005886">
    <property type="term" value="C:plasma membrane"/>
    <property type="evidence" value="ECO:0007669"/>
    <property type="project" value="UniProtKB-SubCell"/>
</dbReference>
<dbReference type="GO" id="GO:0015411">
    <property type="term" value="F:ABC-type taurine transporter transporter activity"/>
    <property type="evidence" value="ECO:0007669"/>
    <property type="project" value="UniProtKB-EC"/>
</dbReference>
<dbReference type="GO" id="GO:0005524">
    <property type="term" value="F:ATP binding"/>
    <property type="evidence" value="ECO:0007669"/>
    <property type="project" value="UniProtKB-KW"/>
</dbReference>
<dbReference type="GO" id="GO:0016887">
    <property type="term" value="F:ATP hydrolysis activity"/>
    <property type="evidence" value="ECO:0007669"/>
    <property type="project" value="InterPro"/>
</dbReference>
<dbReference type="CDD" id="cd03293">
    <property type="entry name" value="ABC_NrtD_SsuB_transporters"/>
    <property type="match status" value="1"/>
</dbReference>
<dbReference type="Gene3D" id="3.40.50.300">
    <property type="entry name" value="P-loop containing nucleotide triphosphate hydrolases"/>
    <property type="match status" value="1"/>
</dbReference>
<dbReference type="InterPro" id="IPR003593">
    <property type="entry name" value="AAA+_ATPase"/>
</dbReference>
<dbReference type="InterPro" id="IPR003439">
    <property type="entry name" value="ABC_transporter-like_ATP-bd"/>
</dbReference>
<dbReference type="InterPro" id="IPR017871">
    <property type="entry name" value="ABC_transporter-like_CS"/>
</dbReference>
<dbReference type="InterPro" id="IPR050166">
    <property type="entry name" value="ABC_transporter_ATP-bind"/>
</dbReference>
<dbReference type="InterPro" id="IPR027417">
    <property type="entry name" value="P-loop_NTPase"/>
</dbReference>
<dbReference type="PANTHER" id="PTHR42788:SF18">
    <property type="entry name" value="TAURINE IMPORT ATP-BINDING PROTEIN TAUB"/>
    <property type="match status" value="1"/>
</dbReference>
<dbReference type="PANTHER" id="PTHR42788">
    <property type="entry name" value="TAURINE IMPORT ATP-BINDING PROTEIN-RELATED"/>
    <property type="match status" value="1"/>
</dbReference>
<dbReference type="Pfam" id="PF00005">
    <property type="entry name" value="ABC_tran"/>
    <property type="match status" value="1"/>
</dbReference>
<dbReference type="SMART" id="SM00382">
    <property type="entry name" value="AAA"/>
    <property type="match status" value="1"/>
</dbReference>
<dbReference type="SUPFAM" id="SSF52540">
    <property type="entry name" value="P-loop containing nucleoside triphosphate hydrolases"/>
    <property type="match status" value="1"/>
</dbReference>
<dbReference type="PROSITE" id="PS00211">
    <property type="entry name" value="ABC_TRANSPORTER_1"/>
    <property type="match status" value="1"/>
</dbReference>
<dbReference type="PROSITE" id="PS50893">
    <property type="entry name" value="ABC_TRANSPORTER_2"/>
    <property type="match status" value="1"/>
</dbReference>
<dbReference type="PROSITE" id="PS51250">
    <property type="entry name" value="TAUB"/>
    <property type="match status" value="1"/>
</dbReference>
<sequence>MSTLEIRGLGVTYEGASTAALEGVDLQIESGEFVVALGASGCGKTTLLNCLAGFIDPTAGCARLNGEPIAGPGAERGVVFQKYALMPWLNVIDNVALGLRFQGVGRARRREIARETLALVGLDQHADARVYALSGGMQQRVGIARALASDPQVLLMDEPMGALDALTRETMQELVLDVWGRTRKTIFFITHSVEEALFLATRLVLMTPGPGRIAESHELPFARQFLASRDARAVKSSPEFIQWRERLVRRLHGEPHTAREVALS</sequence>
<gene>
    <name evidence="1" type="primary">tauB3</name>
    <name type="ordered locus">Bxeno_C0084</name>
    <name type="ORF">Bxe_C0086</name>
</gene>
<keyword id="KW-0067">ATP-binding</keyword>
<keyword id="KW-0997">Cell inner membrane</keyword>
<keyword id="KW-1003">Cell membrane</keyword>
<keyword id="KW-0472">Membrane</keyword>
<keyword id="KW-0547">Nucleotide-binding</keyword>
<keyword id="KW-1185">Reference proteome</keyword>
<keyword id="KW-1278">Translocase</keyword>
<keyword id="KW-0813">Transport</keyword>
<feature type="chain" id="PRO_0000275828" description="Taurine import ATP-binding protein TauB 3">
    <location>
        <begin position="1"/>
        <end position="264"/>
    </location>
</feature>
<feature type="domain" description="ABC transporter" evidence="1">
    <location>
        <begin position="6"/>
        <end position="233"/>
    </location>
</feature>
<feature type="binding site" evidence="1">
    <location>
        <begin position="38"/>
        <end position="45"/>
    </location>
    <ligand>
        <name>ATP</name>
        <dbReference type="ChEBI" id="CHEBI:30616"/>
    </ligand>
</feature>
<name>TAUB3_PARXL</name>
<reference key="1">
    <citation type="journal article" date="2006" name="Proc. Natl. Acad. Sci. U.S.A.">
        <title>Burkholderia xenovorans LB400 harbors a multi-replicon, 9.73-Mbp genome shaped for versatility.</title>
        <authorList>
            <person name="Chain P.S.G."/>
            <person name="Denef V.J."/>
            <person name="Konstantinidis K.T."/>
            <person name="Vergez L.M."/>
            <person name="Agullo L."/>
            <person name="Reyes V.L."/>
            <person name="Hauser L."/>
            <person name="Cordova M."/>
            <person name="Gomez L."/>
            <person name="Gonzalez M."/>
            <person name="Land M."/>
            <person name="Lao V."/>
            <person name="Larimer F."/>
            <person name="LiPuma J.J."/>
            <person name="Mahenthiralingam E."/>
            <person name="Malfatti S.A."/>
            <person name="Marx C.J."/>
            <person name="Parnell J.J."/>
            <person name="Ramette A."/>
            <person name="Richardson P."/>
            <person name="Seeger M."/>
            <person name="Smith D."/>
            <person name="Spilker T."/>
            <person name="Sul W.J."/>
            <person name="Tsoi T.V."/>
            <person name="Ulrich L.E."/>
            <person name="Zhulin I.B."/>
            <person name="Tiedje J.M."/>
        </authorList>
    </citation>
    <scope>NUCLEOTIDE SEQUENCE [LARGE SCALE GENOMIC DNA]</scope>
    <source>
        <strain>LB400</strain>
    </source>
</reference>
<comment type="function">
    <text evidence="1">Part of the ABC transporter complex TauABC involved in taurine import. Responsible for energy coupling to the transport system.</text>
</comment>
<comment type="catalytic activity">
    <reaction evidence="1">
        <text>taurine(out) + ATP + H2O = taurine(in) + ADP + phosphate + H(+)</text>
        <dbReference type="Rhea" id="RHEA:14613"/>
        <dbReference type="ChEBI" id="CHEBI:15377"/>
        <dbReference type="ChEBI" id="CHEBI:15378"/>
        <dbReference type="ChEBI" id="CHEBI:30616"/>
        <dbReference type="ChEBI" id="CHEBI:43474"/>
        <dbReference type="ChEBI" id="CHEBI:456216"/>
        <dbReference type="ChEBI" id="CHEBI:507393"/>
        <dbReference type="EC" id="7.6.2.7"/>
    </reaction>
</comment>
<comment type="subunit">
    <text evidence="1">The complex is composed of two ATP-binding proteins (TauB), two transmembrane proteins (TauC) and a solute-binding protein (TauA).</text>
</comment>
<comment type="subcellular location">
    <subcellularLocation>
        <location evidence="1">Cell inner membrane</location>
        <topology evidence="1">Peripheral membrane protein</topology>
    </subcellularLocation>
</comment>
<comment type="similarity">
    <text evidence="1">Belongs to the ABC transporter superfamily. Taurine importer (TC 3.A.1.17.1) family.</text>
</comment>
<organism>
    <name type="scientific">Paraburkholderia xenovorans (strain LB400)</name>
    <dbReference type="NCBI Taxonomy" id="266265"/>
    <lineage>
        <taxon>Bacteria</taxon>
        <taxon>Pseudomonadati</taxon>
        <taxon>Pseudomonadota</taxon>
        <taxon>Betaproteobacteria</taxon>
        <taxon>Burkholderiales</taxon>
        <taxon>Burkholderiaceae</taxon>
        <taxon>Paraburkholderia</taxon>
    </lineage>
</organism>
<evidence type="ECO:0000255" key="1">
    <source>
        <dbReference type="HAMAP-Rule" id="MF_01714"/>
    </source>
</evidence>
<protein>
    <recommendedName>
        <fullName evidence="1">Taurine import ATP-binding protein TauB 3</fullName>
        <ecNumber evidence="1">7.6.2.7</ecNumber>
    </recommendedName>
</protein>
<accession>Q13IS7</accession>